<gene>
    <name evidence="1" type="primary">groEL</name>
    <name evidence="1" type="synonym">groL</name>
    <name type="ordered locus">H16_A0706</name>
</gene>
<accession>Q0KDR7</accession>
<keyword id="KW-0067">ATP-binding</keyword>
<keyword id="KW-0143">Chaperone</keyword>
<keyword id="KW-0963">Cytoplasm</keyword>
<keyword id="KW-0413">Isomerase</keyword>
<keyword id="KW-0547">Nucleotide-binding</keyword>
<keyword id="KW-1185">Reference proteome</keyword>
<reference key="1">
    <citation type="journal article" date="2006" name="Nat. Biotechnol.">
        <title>Genome sequence of the bioplastic-producing 'Knallgas' bacterium Ralstonia eutropha H16.</title>
        <authorList>
            <person name="Pohlmann A."/>
            <person name="Fricke W.F."/>
            <person name="Reinecke F."/>
            <person name="Kusian B."/>
            <person name="Liesegang H."/>
            <person name="Cramm R."/>
            <person name="Eitinger T."/>
            <person name="Ewering C."/>
            <person name="Poetter M."/>
            <person name="Schwartz E."/>
            <person name="Strittmatter A."/>
            <person name="Voss I."/>
            <person name="Gottschalk G."/>
            <person name="Steinbuechel A."/>
            <person name="Friedrich B."/>
            <person name="Bowien B."/>
        </authorList>
    </citation>
    <scope>NUCLEOTIDE SEQUENCE [LARGE SCALE GENOMIC DNA]</scope>
    <source>
        <strain>ATCC 17699 / DSM 428 / KCTC 22496 / NCIMB 10442 / H16 / Stanier 337</strain>
    </source>
</reference>
<evidence type="ECO:0000255" key="1">
    <source>
        <dbReference type="HAMAP-Rule" id="MF_00600"/>
    </source>
</evidence>
<organism>
    <name type="scientific">Cupriavidus necator (strain ATCC 17699 / DSM 428 / KCTC 22496 / NCIMB 10442 / H16 / Stanier 337)</name>
    <name type="common">Ralstonia eutropha</name>
    <dbReference type="NCBI Taxonomy" id="381666"/>
    <lineage>
        <taxon>Bacteria</taxon>
        <taxon>Pseudomonadati</taxon>
        <taxon>Pseudomonadota</taxon>
        <taxon>Betaproteobacteria</taxon>
        <taxon>Burkholderiales</taxon>
        <taxon>Burkholderiaceae</taxon>
        <taxon>Cupriavidus</taxon>
    </lineage>
</organism>
<feature type="chain" id="PRO_1000025824" description="Chaperonin GroEL">
    <location>
        <begin position="1"/>
        <end position="547"/>
    </location>
</feature>
<feature type="binding site" evidence="1">
    <location>
        <begin position="30"/>
        <end position="33"/>
    </location>
    <ligand>
        <name>ATP</name>
        <dbReference type="ChEBI" id="CHEBI:30616"/>
    </ligand>
</feature>
<feature type="binding site" evidence="1">
    <location>
        <position position="51"/>
    </location>
    <ligand>
        <name>ATP</name>
        <dbReference type="ChEBI" id="CHEBI:30616"/>
    </ligand>
</feature>
<feature type="binding site" evidence="1">
    <location>
        <begin position="87"/>
        <end position="91"/>
    </location>
    <ligand>
        <name>ATP</name>
        <dbReference type="ChEBI" id="CHEBI:30616"/>
    </ligand>
</feature>
<feature type="binding site" evidence="1">
    <location>
        <position position="415"/>
    </location>
    <ligand>
        <name>ATP</name>
        <dbReference type="ChEBI" id="CHEBI:30616"/>
    </ligand>
</feature>
<feature type="binding site" evidence="1">
    <location>
        <begin position="479"/>
        <end position="481"/>
    </location>
    <ligand>
        <name>ATP</name>
        <dbReference type="ChEBI" id="CHEBI:30616"/>
    </ligand>
</feature>
<feature type="binding site" evidence="1">
    <location>
        <position position="495"/>
    </location>
    <ligand>
        <name>ATP</name>
        <dbReference type="ChEBI" id="CHEBI:30616"/>
    </ligand>
</feature>
<comment type="function">
    <text evidence="1">Together with its co-chaperonin GroES, plays an essential role in assisting protein folding. The GroEL-GroES system forms a nano-cage that allows encapsulation of the non-native substrate proteins and provides a physical environment optimized to promote and accelerate protein folding.</text>
</comment>
<comment type="catalytic activity">
    <reaction evidence="1">
        <text>ATP + H2O + a folded polypeptide = ADP + phosphate + an unfolded polypeptide.</text>
        <dbReference type="EC" id="5.6.1.7"/>
    </reaction>
</comment>
<comment type="subunit">
    <text evidence="1">Forms a cylinder of 14 subunits composed of two heptameric rings stacked back-to-back. Interacts with the co-chaperonin GroES.</text>
</comment>
<comment type="subcellular location">
    <subcellularLocation>
        <location evidence="1">Cytoplasm</location>
    </subcellularLocation>
</comment>
<comment type="similarity">
    <text evidence="1">Belongs to the chaperonin (HSP60) family.</text>
</comment>
<protein>
    <recommendedName>
        <fullName evidence="1">Chaperonin GroEL</fullName>
        <ecNumber evidence="1">5.6.1.7</ecNumber>
    </recommendedName>
    <alternativeName>
        <fullName evidence="1">60 kDa chaperonin</fullName>
    </alternativeName>
    <alternativeName>
        <fullName evidence="1">Chaperonin-60</fullName>
        <shortName evidence="1">Cpn60</shortName>
    </alternativeName>
</protein>
<proteinExistence type="inferred from homology"/>
<dbReference type="EC" id="5.6.1.7" evidence="1"/>
<dbReference type="EMBL" id="AM260479">
    <property type="protein sequence ID" value="CAJ91854.1"/>
    <property type="molecule type" value="Genomic_DNA"/>
</dbReference>
<dbReference type="RefSeq" id="WP_010813046.1">
    <property type="nucleotide sequence ID" value="NZ_CP039287.1"/>
</dbReference>
<dbReference type="SMR" id="Q0KDR7"/>
<dbReference type="STRING" id="381666.H16_A0706"/>
<dbReference type="KEGG" id="reh:H16_A0706"/>
<dbReference type="eggNOG" id="COG0459">
    <property type="taxonomic scope" value="Bacteria"/>
</dbReference>
<dbReference type="HOGENOM" id="CLU_016503_3_0_4"/>
<dbReference type="OrthoDB" id="9766614at2"/>
<dbReference type="Proteomes" id="UP000008210">
    <property type="component" value="Chromosome 1"/>
</dbReference>
<dbReference type="GO" id="GO:0005737">
    <property type="term" value="C:cytoplasm"/>
    <property type="evidence" value="ECO:0007669"/>
    <property type="project" value="UniProtKB-SubCell"/>
</dbReference>
<dbReference type="GO" id="GO:0005524">
    <property type="term" value="F:ATP binding"/>
    <property type="evidence" value="ECO:0007669"/>
    <property type="project" value="UniProtKB-UniRule"/>
</dbReference>
<dbReference type="GO" id="GO:0140662">
    <property type="term" value="F:ATP-dependent protein folding chaperone"/>
    <property type="evidence" value="ECO:0007669"/>
    <property type="project" value="InterPro"/>
</dbReference>
<dbReference type="GO" id="GO:0016853">
    <property type="term" value="F:isomerase activity"/>
    <property type="evidence" value="ECO:0007669"/>
    <property type="project" value="UniProtKB-KW"/>
</dbReference>
<dbReference type="GO" id="GO:0051082">
    <property type="term" value="F:unfolded protein binding"/>
    <property type="evidence" value="ECO:0007669"/>
    <property type="project" value="UniProtKB-UniRule"/>
</dbReference>
<dbReference type="GO" id="GO:0042026">
    <property type="term" value="P:protein refolding"/>
    <property type="evidence" value="ECO:0007669"/>
    <property type="project" value="UniProtKB-UniRule"/>
</dbReference>
<dbReference type="CDD" id="cd03344">
    <property type="entry name" value="GroEL"/>
    <property type="match status" value="1"/>
</dbReference>
<dbReference type="FunFam" id="1.10.560.10:FF:000001">
    <property type="entry name" value="60 kDa chaperonin"/>
    <property type="match status" value="1"/>
</dbReference>
<dbReference type="FunFam" id="3.50.7.10:FF:000001">
    <property type="entry name" value="60 kDa chaperonin"/>
    <property type="match status" value="1"/>
</dbReference>
<dbReference type="Gene3D" id="3.50.7.10">
    <property type="entry name" value="GroEL"/>
    <property type="match status" value="1"/>
</dbReference>
<dbReference type="Gene3D" id="1.10.560.10">
    <property type="entry name" value="GroEL-like equatorial domain"/>
    <property type="match status" value="1"/>
</dbReference>
<dbReference type="Gene3D" id="3.30.260.10">
    <property type="entry name" value="TCP-1-like chaperonin intermediate domain"/>
    <property type="match status" value="1"/>
</dbReference>
<dbReference type="HAMAP" id="MF_00600">
    <property type="entry name" value="CH60"/>
    <property type="match status" value="1"/>
</dbReference>
<dbReference type="InterPro" id="IPR018370">
    <property type="entry name" value="Chaperonin_Cpn60_CS"/>
</dbReference>
<dbReference type="InterPro" id="IPR001844">
    <property type="entry name" value="Cpn60/GroEL"/>
</dbReference>
<dbReference type="InterPro" id="IPR002423">
    <property type="entry name" value="Cpn60/GroEL/TCP-1"/>
</dbReference>
<dbReference type="InterPro" id="IPR027409">
    <property type="entry name" value="GroEL-like_apical_dom_sf"/>
</dbReference>
<dbReference type="InterPro" id="IPR027413">
    <property type="entry name" value="GROEL-like_equatorial_sf"/>
</dbReference>
<dbReference type="InterPro" id="IPR027410">
    <property type="entry name" value="TCP-1-like_intermed_sf"/>
</dbReference>
<dbReference type="NCBIfam" id="TIGR02348">
    <property type="entry name" value="GroEL"/>
    <property type="match status" value="1"/>
</dbReference>
<dbReference type="NCBIfam" id="NF000592">
    <property type="entry name" value="PRK00013.1"/>
    <property type="match status" value="1"/>
</dbReference>
<dbReference type="NCBIfam" id="NF009487">
    <property type="entry name" value="PRK12849.1"/>
    <property type="match status" value="1"/>
</dbReference>
<dbReference type="NCBIfam" id="NF009488">
    <property type="entry name" value="PRK12850.1"/>
    <property type="match status" value="1"/>
</dbReference>
<dbReference type="NCBIfam" id="NF009489">
    <property type="entry name" value="PRK12851.1"/>
    <property type="match status" value="1"/>
</dbReference>
<dbReference type="PANTHER" id="PTHR45633">
    <property type="entry name" value="60 KDA HEAT SHOCK PROTEIN, MITOCHONDRIAL"/>
    <property type="match status" value="1"/>
</dbReference>
<dbReference type="Pfam" id="PF00118">
    <property type="entry name" value="Cpn60_TCP1"/>
    <property type="match status" value="1"/>
</dbReference>
<dbReference type="PRINTS" id="PR00298">
    <property type="entry name" value="CHAPERONIN60"/>
</dbReference>
<dbReference type="SUPFAM" id="SSF52029">
    <property type="entry name" value="GroEL apical domain-like"/>
    <property type="match status" value="1"/>
</dbReference>
<dbReference type="SUPFAM" id="SSF48592">
    <property type="entry name" value="GroEL equatorial domain-like"/>
    <property type="match status" value="1"/>
</dbReference>
<dbReference type="SUPFAM" id="SSF54849">
    <property type="entry name" value="GroEL-intermediate domain like"/>
    <property type="match status" value="1"/>
</dbReference>
<dbReference type="PROSITE" id="PS00296">
    <property type="entry name" value="CHAPERONINS_CPN60"/>
    <property type="match status" value="1"/>
</dbReference>
<sequence length="547" mass="57329">MAAKDVVFGDAARAKMVEGVNILANAVKVTLGPKGRNVVLERSFGGPTVTKDGVSVAKEIELKDKLQNMGAQMVKEVASKTSDNAGDGTTTATVLAQSIVREGMKFVAAGMNPMDLKRGIDKAVAAAVEELKKVSKPTTTSKEIAQVGAISANSDTSIGERIAEAMDKVGKEGVITVEDGKSLADELEVVEGMQFDRGYLSPYFINNPEKQVVQLDNPFVLLFDKKISNIRDLLPVLEQVAKAGRPLLIVAEDVEGEALATLVVNNIRGILKTAAVKAPGFGDRRKAMLEDIAILTGGTVIAEEIGLTLEKAGLNDLGQAKRIEIGKENTIIIDGAGDAAAIEGRVKQIRAQIEEATSDYDREKLQERVAKLAGGVAVIKVGAATEVEMKEKKARVEDALHATRAAVEEGIVPGGGVALLRARAAISALTGENADQNAGIKIVLRAMEEPLRQIVLNAGEEASVVVAKVIEGKGNYGYNAASGEYGDLVEMGVLDPTKVTRTALQNAASVASLMLTTDCAVAESPKEESAPAMPGGMGGMGGMEGMM</sequence>
<name>CH60_CUPNH</name>